<proteinExistence type="inferred from homology"/>
<dbReference type="EC" id="6.1.1.14" evidence="1"/>
<dbReference type="EMBL" id="CP001219">
    <property type="protein sequence ID" value="ACK79291.1"/>
    <property type="molecule type" value="Genomic_DNA"/>
</dbReference>
<dbReference type="RefSeq" id="WP_012537273.1">
    <property type="nucleotide sequence ID" value="NC_011761.1"/>
</dbReference>
<dbReference type="SMR" id="B7J7P8"/>
<dbReference type="STRING" id="243159.AFE_2581"/>
<dbReference type="PaxDb" id="243159-AFE_2581"/>
<dbReference type="GeneID" id="65281633"/>
<dbReference type="KEGG" id="afr:AFE_2581"/>
<dbReference type="eggNOG" id="COG0751">
    <property type="taxonomic scope" value="Bacteria"/>
</dbReference>
<dbReference type="HOGENOM" id="CLU_007220_2_2_6"/>
<dbReference type="Proteomes" id="UP000001362">
    <property type="component" value="Chromosome"/>
</dbReference>
<dbReference type="GO" id="GO:0005829">
    <property type="term" value="C:cytosol"/>
    <property type="evidence" value="ECO:0007669"/>
    <property type="project" value="TreeGrafter"/>
</dbReference>
<dbReference type="GO" id="GO:0004814">
    <property type="term" value="F:arginine-tRNA ligase activity"/>
    <property type="evidence" value="ECO:0007669"/>
    <property type="project" value="InterPro"/>
</dbReference>
<dbReference type="GO" id="GO:0005524">
    <property type="term" value="F:ATP binding"/>
    <property type="evidence" value="ECO:0007669"/>
    <property type="project" value="UniProtKB-UniRule"/>
</dbReference>
<dbReference type="GO" id="GO:0004820">
    <property type="term" value="F:glycine-tRNA ligase activity"/>
    <property type="evidence" value="ECO:0007669"/>
    <property type="project" value="UniProtKB-UniRule"/>
</dbReference>
<dbReference type="GO" id="GO:0006420">
    <property type="term" value="P:arginyl-tRNA aminoacylation"/>
    <property type="evidence" value="ECO:0007669"/>
    <property type="project" value="InterPro"/>
</dbReference>
<dbReference type="GO" id="GO:0006426">
    <property type="term" value="P:glycyl-tRNA aminoacylation"/>
    <property type="evidence" value="ECO:0007669"/>
    <property type="project" value="UniProtKB-UniRule"/>
</dbReference>
<dbReference type="HAMAP" id="MF_00255">
    <property type="entry name" value="Gly_tRNA_synth_beta"/>
    <property type="match status" value="1"/>
</dbReference>
<dbReference type="InterPro" id="IPR008909">
    <property type="entry name" value="DALR_anticod-bd"/>
</dbReference>
<dbReference type="InterPro" id="IPR015944">
    <property type="entry name" value="Gly-tRNA-synth_bsu"/>
</dbReference>
<dbReference type="InterPro" id="IPR006194">
    <property type="entry name" value="Gly-tRNA-synth_heterodimer"/>
</dbReference>
<dbReference type="NCBIfam" id="TIGR00211">
    <property type="entry name" value="glyS"/>
    <property type="match status" value="1"/>
</dbReference>
<dbReference type="PANTHER" id="PTHR30075:SF2">
    <property type="entry name" value="GLYCINE--TRNA LIGASE, CHLOROPLASTIC_MITOCHONDRIAL 2"/>
    <property type="match status" value="1"/>
</dbReference>
<dbReference type="PANTHER" id="PTHR30075">
    <property type="entry name" value="GLYCYL-TRNA SYNTHETASE"/>
    <property type="match status" value="1"/>
</dbReference>
<dbReference type="Pfam" id="PF05746">
    <property type="entry name" value="DALR_1"/>
    <property type="match status" value="1"/>
</dbReference>
<dbReference type="Pfam" id="PF02092">
    <property type="entry name" value="tRNA_synt_2f"/>
    <property type="match status" value="1"/>
</dbReference>
<dbReference type="PRINTS" id="PR01045">
    <property type="entry name" value="TRNASYNTHGB"/>
</dbReference>
<dbReference type="SUPFAM" id="SSF109604">
    <property type="entry name" value="HD-domain/PDEase-like"/>
    <property type="match status" value="1"/>
</dbReference>
<dbReference type="PROSITE" id="PS50861">
    <property type="entry name" value="AA_TRNA_LIGASE_II_GLYAB"/>
    <property type="match status" value="1"/>
</dbReference>
<feature type="chain" id="PRO_1000197162" description="Glycine--tRNA ligase beta subunit">
    <location>
        <begin position="1"/>
        <end position="694"/>
    </location>
</feature>
<protein>
    <recommendedName>
        <fullName evidence="1">Glycine--tRNA ligase beta subunit</fullName>
        <ecNumber evidence="1">6.1.1.14</ecNumber>
    </recommendedName>
    <alternativeName>
        <fullName evidence="1">Glycyl-tRNA synthetase beta subunit</fullName>
        <shortName evidence="1">GlyRS</shortName>
    </alternativeName>
</protein>
<sequence>MSAPEDLLLELGCEELPAREQMPLQDAATGIIGQLLDAAGLQFGSIHGYVTPRRLALWIKDVSRQSLPQETLRRGPLVARARDAQGKPTAAAEGFARSCGVSLDDLLTLETEKGPVLAWREVGTAQDSHALLPEIASRLVTSLPLRKRMRWGAGSDSFLRPVRWLLLRQGGQVLDWKMFGLDAGGESFGHRVHHPQAVRISTPAGYAGSLLQAKVMVDFAERRAHISGKMAALADEMAVTPILPEALLDEITGLNEWPVVLAGSFAADYLRVPEEALITVMMQHQRYVPLRGRNERLVPHYLFAANLHSRDTQVVIDGNNRVLRARLADAAFFWDQDRQISLQTRRAALAGVLFQDGLGSILDKTVRLQELAAALSPQFAVDAGDMNRAAALCKSDLLSGLVGEFPELQGIMGGHYARHDGENNRVATAIAQHYLPSGRDDEIPADAHGQCLAIADKLDTLCGFFAIGKVPTGDRDPFALRRAALGVLRIVLDAGVPLNLDEAVTRTLAAYGGAFARNRTEIRSAILDFFQDRMRVYFREEGFRADQIAAVLSRQPHEPLDARQRLEALALFQAEHAAADALAALIKRINNLLRKEVISGDWPIDPQYFMDPVENTLWDYWQALEQPLHAQLAERRYTAALGLLAGLRPAVDQFFDGVMVLAEDPVLRQNRLALLARLQEAFLRIADFSQLQGA</sequence>
<organism>
    <name type="scientific">Acidithiobacillus ferrooxidans (strain ATCC 23270 / DSM 14882 / CIP 104768 / NCIMB 8455)</name>
    <name type="common">Ferrobacillus ferrooxidans (strain ATCC 23270)</name>
    <dbReference type="NCBI Taxonomy" id="243159"/>
    <lineage>
        <taxon>Bacteria</taxon>
        <taxon>Pseudomonadati</taxon>
        <taxon>Pseudomonadota</taxon>
        <taxon>Acidithiobacillia</taxon>
        <taxon>Acidithiobacillales</taxon>
        <taxon>Acidithiobacillaceae</taxon>
        <taxon>Acidithiobacillus</taxon>
    </lineage>
</organism>
<reference key="1">
    <citation type="journal article" date="2008" name="BMC Genomics">
        <title>Acidithiobacillus ferrooxidans metabolism: from genome sequence to industrial applications.</title>
        <authorList>
            <person name="Valdes J."/>
            <person name="Pedroso I."/>
            <person name="Quatrini R."/>
            <person name="Dodson R.J."/>
            <person name="Tettelin H."/>
            <person name="Blake R. II"/>
            <person name="Eisen J.A."/>
            <person name="Holmes D.S."/>
        </authorList>
    </citation>
    <scope>NUCLEOTIDE SEQUENCE [LARGE SCALE GENOMIC DNA]</scope>
    <source>
        <strain>ATCC 23270 / DSM 14882 / CIP 104768 / NCIMB 8455</strain>
    </source>
</reference>
<name>SYGB_ACIF2</name>
<keyword id="KW-0030">Aminoacyl-tRNA synthetase</keyword>
<keyword id="KW-0067">ATP-binding</keyword>
<keyword id="KW-0963">Cytoplasm</keyword>
<keyword id="KW-0436">Ligase</keyword>
<keyword id="KW-0547">Nucleotide-binding</keyword>
<keyword id="KW-0648">Protein biosynthesis</keyword>
<keyword id="KW-1185">Reference proteome</keyword>
<accession>B7J7P8</accession>
<evidence type="ECO:0000255" key="1">
    <source>
        <dbReference type="HAMAP-Rule" id="MF_00255"/>
    </source>
</evidence>
<comment type="catalytic activity">
    <reaction evidence="1">
        <text>tRNA(Gly) + glycine + ATP = glycyl-tRNA(Gly) + AMP + diphosphate</text>
        <dbReference type="Rhea" id="RHEA:16013"/>
        <dbReference type="Rhea" id="RHEA-COMP:9664"/>
        <dbReference type="Rhea" id="RHEA-COMP:9683"/>
        <dbReference type="ChEBI" id="CHEBI:30616"/>
        <dbReference type="ChEBI" id="CHEBI:33019"/>
        <dbReference type="ChEBI" id="CHEBI:57305"/>
        <dbReference type="ChEBI" id="CHEBI:78442"/>
        <dbReference type="ChEBI" id="CHEBI:78522"/>
        <dbReference type="ChEBI" id="CHEBI:456215"/>
        <dbReference type="EC" id="6.1.1.14"/>
    </reaction>
</comment>
<comment type="subunit">
    <text evidence="1">Tetramer of two alpha and two beta subunits.</text>
</comment>
<comment type="subcellular location">
    <subcellularLocation>
        <location evidence="1">Cytoplasm</location>
    </subcellularLocation>
</comment>
<comment type="similarity">
    <text evidence="1">Belongs to the class-II aminoacyl-tRNA synthetase family.</text>
</comment>
<gene>
    <name evidence="1" type="primary">glyS</name>
    <name type="ordered locus">AFE_2581</name>
</gene>